<evidence type="ECO:0000255" key="1">
    <source>
        <dbReference type="HAMAP-Rule" id="MF_01021"/>
    </source>
</evidence>
<dbReference type="EC" id="3.5.4.19" evidence="1"/>
<dbReference type="EMBL" id="CP000133">
    <property type="protein sequence ID" value="ABC90983.1"/>
    <property type="molecule type" value="Genomic_DNA"/>
</dbReference>
<dbReference type="RefSeq" id="WP_011425464.1">
    <property type="nucleotide sequence ID" value="NC_007761.1"/>
</dbReference>
<dbReference type="SMR" id="Q2K853"/>
<dbReference type="KEGG" id="ret:RHE_CH02202"/>
<dbReference type="eggNOG" id="COG0139">
    <property type="taxonomic scope" value="Bacteria"/>
</dbReference>
<dbReference type="HOGENOM" id="CLU_048577_5_0_5"/>
<dbReference type="OrthoDB" id="9795769at2"/>
<dbReference type="UniPathway" id="UPA00031">
    <property type="reaction ID" value="UER00008"/>
</dbReference>
<dbReference type="Proteomes" id="UP000001936">
    <property type="component" value="Chromosome"/>
</dbReference>
<dbReference type="GO" id="GO:0005737">
    <property type="term" value="C:cytoplasm"/>
    <property type="evidence" value="ECO:0007669"/>
    <property type="project" value="UniProtKB-SubCell"/>
</dbReference>
<dbReference type="GO" id="GO:0000287">
    <property type="term" value="F:magnesium ion binding"/>
    <property type="evidence" value="ECO:0007669"/>
    <property type="project" value="UniProtKB-UniRule"/>
</dbReference>
<dbReference type="GO" id="GO:0004635">
    <property type="term" value="F:phosphoribosyl-AMP cyclohydrolase activity"/>
    <property type="evidence" value="ECO:0007669"/>
    <property type="project" value="UniProtKB-UniRule"/>
</dbReference>
<dbReference type="GO" id="GO:0008270">
    <property type="term" value="F:zinc ion binding"/>
    <property type="evidence" value="ECO:0007669"/>
    <property type="project" value="UniProtKB-UniRule"/>
</dbReference>
<dbReference type="GO" id="GO:0000105">
    <property type="term" value="P:L-histidine biosynthetic process"/>
    <property type="evidence" value="ECO:0007669"/>
    <property type="project" value="UniProtKB-UniRule"/>
</dbReference>
<dbReference type="FunFam" id="3.10.20.810:FF:000001">
    <property type="entry name" value="Histidine biosynthesis bifunctional protein HisIE"/>
    <property type="match status" value="1"/>
</dbReference>
<dbReference type="Gene3D" id="4.10.80.70">
    <property type="match status" value="1"/>
</dbReference>
<dbReference type="Gene3D" id="3.10.20.810">
    <property type="entry name" value="Phosphoribosyl-AMP cyclohydrolase"/>
    <property type="match status" value="1"/>
</dbReference>
<dbReference type="HAMAP" id="MF_01021">
    <property type="entry name" value="HisI"/>
    <property type="match status" value="1"/>
</dbReference>
<dbReference type="InterPro" id="IPR026660">
    <property type="entry name" value="PRA-CH"/>
</dbReference>
<dbReference type="InterPro" id="IPR002496">
    <property type="entry name" value="PRib_AMP_CycHydrolase_dom"/>
</dbReference>
<dbReference type="InterPro" id="IPR038019">
    <property type="entry name" value="PRib_AMP_CycHydrolase_sf"/>
</dbReference>
<dbReference type="NCBIfam" id="NF000768">
    <property type="entry name" value="PRK00051.1"/>
    <property type="match status" value="1"/>
</dbReference>
<dbReference type="PANTHER" id="PTHR42945">
    <property type="entry name" value="HISTIDINE BIOSYNTHESIS BIFUNCTIONAL PROTEIN"/>
    <property type="match status" value="1"/>
</dbReference>
<dbReference type="PANTHER" id="PTHR42945:SF1">
    <property type="entry name" value="HISTIDINE BIOSYNTHESIS BIFUNCTIONAL PROTEIN HIS7"/>
    <property type="match status" value="1"/>
</dbReference>
<dbReference type="Pfam" id="PF01502">
    <property type="entry name" value="PRA-CH"/>
    <property type="match status" value="1"/>
</dbReference>
<dbReference type="SUPFAM" id="SSF141734">
    <property type="entry name" value="HisI-like"/>
    <property type="match status" value="1"/>
</dbReference>
<reference key="1">
    <citation type="journal article" date="2006" name="Proc. Natl. Acad. Sci. U.S.A.">
        <title>The partitioned Rhizobium etli genome: genetic and metabolic redundancy in seven interacting replicons.</title>
        <authorList>
            <person name="Gonzalez V."/>
            <person name="Santamaria R.I."/>
            <person name="Bustos P."/>
            <person name="Hernandez-Gonzalez I."/>
            <person name="Medrano-Soto A."/>
            <person name="Moreno-Hagelsieb G."/>
            <person name="Janga S.C."/>
            <person name="Ramirez M.A."/>
            <person name="Jimenez-Jacinto V."/>
            <person name="Collado-Vides J."/>
            <person name="Davila G."/>
        </authorList>
    </citation>
    <scope>NUCLEOTIDE SEQUENCE [LARGE SCALE GENOMIC DNA]</scope>
    <source>
        <strain>ATCC 51251 / DSM 11541 / JCM 21823 / NBRC 15573 / CFN 42</strain>
    </source>
</reference>
<sequence>MGQLIFNQPSEDKSALEDAGDFTPRFDDRGLITAVVADAGDGELLMVAHMNAQALALTIQTGTAHYFSRSRGKIWKKGETSGNLQTVKEIRTDCDQDAIWLKVEVAGHDATCHTGRRSCFYRTVTLREGKPMLDIVDDERHFDPQDVYGK</sequence>
<feature type="chain" id="PRO_0000319707" description="Phosphoribosyl-AMP cyclohydrolase">
    <location>
        <begin position="1"/>
        <end position="150"/>
    </location>
</feature>
<feature type="binding site" evidence="1">
    <location>
        <position position="93"/>
    </location>
    <ligand>
        <name>Mg(2+)</name>
        <dbReference type="ChEBI" id="CHEBI:18420"/>
    </ligand>
</feature>
<feature type="binding site" evidence="1">
    <location>
        <position position="94"/>
    </location>
    <ligand>
        <name>Zn(2+)</name>
        <dbReference type="ChEBI" id="CHEBI:29105"/>
        <note>ligand shared between dimeric partners</note>
    </ligand>
</feature>
<feature type="binding site" evidence="1">
    <location>
        <position position="95"/>
    </location>
    <ligand>
        <name>Mg(2+)</name>
        <dbReference type="ChEBI" id="CHEBI:18420"/>
    </ligand>
</feature>
<feature type="binding site" evidence="1">
    <location>
        <position position="97"/>
    </location>
    <ligand>
        <name>Mg(2+)</name>
        <dbReference type="ChEBI" id="CHEBI:18420"/>
    </ligand>
</feature>
<feature type="binding site" evidence="1">
    <location>
        <position position="112"/>
    </location>
    <ligand>
        <name>Zn(2+)</name>
        <dbReference type="ChEBI" id="CHEBI:29105"/>
        <note>ligand shared between dimeric partners</note>
    </ligand>
</feature>
<feature type="binding site" evidence="1">
    <location>
        <position position="119"/>
    </location>
    <ligand>
        <name>Zn(2+)</name>
        <dbReference type="ChEBI" id="CHEBI:29105"/>
        <note>ligand shared between dimeric partners</note>
    </ligand>
</feature>
<gene>
    <name evidence="1" type="primary">hisI</name>
    <name type="ordered locus">RHE_CH02202</name>
</gene>
<organism>
    <name type="scientific">Rhizobium etli (strain ATCC 51251 / DSM 11541 / JCM 21823 / NBRC 15573 / CFN 42)</name>
    <dbReference type="NCBI Taxonomy" id="347834"/>
    <lineage>
        <taxon>Bacteria</taxon>
        <taxon>Pseudomonadati</taxon>
        <taxon>Pseudomonadota</taxon>
        <taxon>Alphaproteobacteria</taxon>
        <taxon>Hyphomicrobiales</taxon>
        <taxon>Rhizobiaceae</taxon>
        <taxon>Rhizobium/Agrobacterium group</taxon>
        <taxon>Rhizobium</taxon>
    </lineage>
</organism>
<accession>Q2K853</accession>
<proteinExistence type="inferred from homology"/>
<comment type="function">
    <text evidence="1">Catalyzes the hydrolysis of the adenine ring of phosphoribosyl-AMP.</text>
</comment>
<comment type="catalytic activity">
    <reaction evidence="1">
        <text>1-(5-phospho-beta-D-ribosyl)-5'-AMP + H2O = 1-(5-phospho-beta-D-ribosyl)-5-[(5-phospho-beta-D-ribosylamino)methylideneamino]imidazole-4-carboxamide</text>
        <dbReference type="Rhea" id="RHEA:20049"/>
        <dbReference type="ChEBI" id="CHEBI:15377"/>
        <dbReference type="ChEBI" id="CHEBI:58435"/>
        <dbReference type="ChEBI" id="CHEBI:59457"/>
        <dbReference type="EC" id="3.5.4.19"/>
    </reaction>
</comment>
<comment type="cofactor">
    <cofactor evidence="1">
        <name>Mg(2+)</name>
        <dbReference type="ChEBI" id="CHEBI:18420"/>
    </cofactor>
    <text evidence="1">Binds 1 Mg(2+) ion per subunit.</text>
</comment>
<comment type="cofactor">
    <cofactor evidence="1">
        <name>Zn(2+)</name>
        <dbReference type="ChEBI" id="CHEBI:29105"/>
    </cofactor>
    <text evidence="1">Binds 1 zinc ion per subunit.</text>
</comment>
<comment type="pathway">
    <text evidence="1">Amino-acid biosynthesis; L-histidine biosynthesis; L-histidine from 5-phospho-alpha-D-ribose 1-diphosphate: step 3/9.</text>
</comment>
<comment type="subunit">
    <text evidence="1">Homodimer.</text>
</comment>
<comment type="subcellular location">
    <subcellularLocation>
        <location evidence="1">Cytoplasm</location>
    </subcellularLocation>
</comment>
<comment type="similarity">
    <text evidence="1">Belongs to the PRA-CH family.</text>
</comment>
<protein>
    <recommendedName>
        <fullName evidence="1">Phosphoribosyl-AMP cyclohydrolase</fullName>
        <shortName evidence="1">PRA-CH</shortName>
        <ecNumber evidence="1">3.5.4.19</ecNumber>
    </recommendedName>
</protein>
<keyword id="KW-0028">Amino-acid biosynthesis</keyword>
<keyword id="KW-0963">Cytoplasm</keyword>
<keyword id="KW-0368">Histidine biosynthesis</keyword>
<keyword id="KW-0378">Hydrolase</keyword>
<keyword id="KW-0460">Magnesium</keyword>
<keyword id="KW-0479">Metal-binding</keyword>
<keyword id="KW-1185">Reference proteome</keyword>
<keyword id="KW-0862">Zinc</keyword>
<name>HIS3_RHIEC</name>